<name>RNH2_FUSNN</name>
<dbReference type="EC" id="3.1.26.4" evidence="1"/>
<dbReference type="EMBL" id="AE009951">
    <property type="protein sequence ID" value="AAL95567.1"/>
    <property type="molecule type" value="Genomic_DNA"/>
</dbReference>
<dbReference type="RefSeq" id="NP_604268.1">
    <property type="nucleotide sequence ID" value="NC_003454.1"/>
</dbReference>
<dbReference type="SMR" id="Q8RDX3"/>
<dbReference type="FunCoup" id="Q8RDX3">
    <property type="interactions" value="338"/>
</dbReference>
<dbReference type="STRING" id="190304.FN1371"/>
<dbReference type="PaxDb" id="190304-FN1371"/>
<dbReference type="EnsemblBacteria" id="AAL95567">
    <property type="protein sequence ID" value="AAL95567"/>
    <property type="gene ID" value="FN1371"/>
</dbReference>
<dbReference type="KEGG" id="fnu:FN1371"/>
<dbReference type="PATRIC" id="fig|190304.8.peg.1936"/>
<dbReference type="eggNOG" id="COG0164">
    <property type="taxonomic scope" value="Bacteria"/>
</dbReference>
<dbReference type="HOGENOM" id="CLU_036532_3_2_0"/>
<dbReference type="InParanoid" id="Q8RDX3"/>
<dbReference type="BioCyc" id="FNUC190304:G1FZS-1943-MONOMER"/>
<dbReference type="Proteomes" id="UP000002521">
    <property type="component" value="Chromosome"/>
</dbReference>
<dbReference type="GO" id="GO:0005737">
    <property type="term" value="C:cytoplasm"/>
    <property type="evidence" value="ECO:0007669"/>
    <property type="project" value="UniProtKB-SubCell"/>
</dbReference>
<dbReference type="GO" id="GO:0032299">
    <property type="term" value="C:ribonuclease H2 complex"/>
    <property type="evidence" value="ECO:0000318"/>
    <property type="project" value="GO_Central"/>
</dbReference>
<dbReference type="GO" id="GO:0030145">
    <property type="term" value="F:manganese ion binding"/>
    <property type="evidence" value="ECO:0007669"/>
    <property type="project" value="UniProtKB-UniRule"/>
</dbReference>
<dbReference type="GO" id="GO:0003723">
    <property type="term" value="F:RNA binding"/>
    <property type="evidence" value="ECO:0007669"/>
    <property type="project" value="InterPro"/>
</dbReference>
<dbReference type="GO" id="GO:0004523">
    <property type="term" value="F:RNA-DNA hybrid ribonuclease activity"/>
    <property type="evidence" value="ECO:0000318"/>
    <property type="project" value="GO_Central"/>
</dbReference>
<dbReference type="GO" id="GO:0043137">
    <property type="term" value="P:DNA replication, removal of RNA primer"/>
    <property type="evidence" value="ECO:0000318"/>
    <property type="project" value="GO_Central"/>
</dbReference>
<dbReference type="GO" id="GO:0006298">
    <property type="term" value="P:mismatch repair"/>
    <property type="evidence" value="ECO:0000318"/>
    <property type="project" value="GO_Central"/>
</dbReference>
<dbReference type="CDD" id="cd07182">
    <property type="entry name" value="RNase_HII_bacteria_HII_like"/>
    <property type="match status" value="1"/>
</dbReference>
<dbReference type="FunFam" id="3.30.420.10:FF:000078">
    <property type="entry name" value="Ribonuclease HII"/>
    <property type="match status" value="1"/>
</dbReference>
<dbReference type="Gene3D" id="3.30.420.10">
    <property type="entry name" value="Ribonuclease H-like superfamily/Ribonuclease H"/>
    <property type="match status" value="1"/>
</dbReference>
<dbReference type="HAMAP" id="MF_00052_B">
    <property type="entry name" value="RNase_HII_B"/>
    <property type="match status" value="1"/>
</dbReference>
<dbReference type="InterPro" id="IPR022898">
    <property type="entry name" value="RNase_HII"/>
</dbReference>
<dbReference type="InterPro" id="IPR001352">
    <property type="entry name" value="RNase_HII/HIII"/>
</dbReference>
<dbReference type="InterPro" id="IPR024567">
    <property type="entry name" value="RNase_HII/HIII_dom"/>
</dbReference>
<dbReference type="InterPro" id="IPR012337">
    <property type="entry name" value="RNaseH-like_sf"/>
</dbReference>
<dbReference type="InterPro" id="IPR036397">
    <property type="entry name" value="RNaseH_sf"/>
</dbReference>
<dbReference type="NCBIfam" id="NF000595">
    <property type="entry name" value="PRK00015.1-3"/>
    <property type="match status" value="1"/>
</dbReference>
<dbReference type="PANTHER" id="PTHR10954">
    <property type="entry name" value="RIBONUCLEASE H2 SUBUNIT A"/>
    <property type="match status" value="1"/>
</dbReference>
<dbReference type="PANTHER" id="PTHR10954:SF18">
    <property type="entry name" value="RIBONUCLEASE HII"/>
    <property type="match status" value="1"/>
</dbReference>
<dbReference type="Pfam" id="PF01351">
    <property type="entry name" value="RNase_HII"/>
    <property type="match status" value="1"/>
</dbReference>
<dbReference type="SUPFAM" id="SSF53098">
    <property type="entry name" value="Ribonuclease H-like"/>
    <property type="match status" value="1"/>
</dbReference>
<dbReference type="PROSITE" id="PS51975">
    <property type="entry name" value="RNASE_H_2"/>
    <property type="match status" value="1"/>
</dbReference>
<feature type="chain" id="PRO_0000111576" description="Ribonuclease HII">
    <location>
        <begin position="1"/>
        <end position="215"/>
    </location>
</feature>
<feature type="domain" description="RNase H type-2" evidence="2">
    <location>
        <begin position="19"/>
        <end position="214"/>
    </location>
</feature>
<feature type="binding site" evidence="1">
    <location>
        <position position="25"/>
    </location>
    <ligand>
        <name>a divalent metal cation</name>
        <dbReference type="ChEBI" id="CHEBI:60240"/>
    </ligand>
</feature>
<feature type="binding site" evidence="1">
    <location>
        <position position="26"/>
    </location>
    <ligand>
        <name>a divalent metal cation</name>
        <dbReference type="ChEBI" id="CHEBI:60240"/>
    </ligand>
</feature>
<feature type="binding site" evidence="1">
    <location>
        <position position="121"/>
    </location>
    <ligand>
        <name>a divalent metal cation</name>
        <dbReference type="ChEBI" id="CHEBI:60240"/>
    </ligand>
</feature>
<accession>Q8RDX3</accession>
<protein>
    <recommendedName>
        <fullName evidence="1">Ribonuclease HII</fullName>
        <shortName evidence="1">RNase HII</shortName>
        <ecNumber evidence="1">3.1.26.4</ecNumber>
    </recommendedName>
</protein>
<sequence length="215" mass="24392">MLMEEIMDNPLYLYDLEYKNVIGVDEAGRGPLAGPVVAAAVILKEYTEELDEINDSKKLTEKKREKLYDIIMKNFDVAVGISTVEEIDKLNILNADFLAMRRALKDLKSLKNEKEYTVLVDGNLKIKEYIGKQLPIVKGDAKSLSIAAASIIAKVTRDRLMKDLANIYPDYSFEKHKGYGTKTHIEAIKDKGAIEGVHRKVFLRKILETEEEKTK</sequence>
<proteinExistence type="inferred from homology"/>
<reference key="1">
    <citation type="journal article" date="2002" name="J. Bacteriol.">
        <title>Genome sequence and analysis of the oral bacterium Fusobacterium nucleatum strain ATCC 25586.</title>
        <authorList>
            <person name="Kapatral V."/>
            <person name="Anderson I."/>
            <person name="Ivanova N."/>
            <person name="Reznik G."/>
            <person name="Los T."/>
            <person name="Lykidis A."/>
            <person name="Bhattacharyya A."/>
            <person name="Bartman A."/>
            <person name="Gardner W."/>
            <person name="Grechkin G."/>
            <person name="Zhu L."/>
            <person name="Vasieva O."/>
            <person name="Chu L."/>
            <person name="Kogan Y."/>
            <person name="Chaga O."/>
            <person name="Goltsman E."/>
            <person name="Bernal A."/>
            <person name="Larsen N."/>
            <person name="D'Souza M."/>
            <person name="Walunas T."/>
            <person name="Pusch G."/>
            <person name="Haselkorn R."/>
            <person name="Fonstein M."/>
            <person name="Kyrpides N.C."/>
            <person name="Overbeek R."/>
        </authorList>
    </citation>
    <scope>NUCLEOTIDE SEQUENCE [LARGE SCALE GENOMIC DNA]</scope>
    <source>
        <strain>ATCC 25586 / DSM 15643 / BCRC 10681 / CIP 101130 / JCM 8532 / KCTC 2640 / LMG 13131 / VPI 4355</strain>
    </source>
</reference>
<organism>
    <name type="scientific">Fusobacterium nucleatum subsp. nucleatum (strain ATCC 25586 / DSM 15643 / BCRC 10681 / CIP 101130 / JCM 8532 / KCTC 2640 / LMG 13131 / VPI 4355)</name>
    <dbReference type="NCBI Taxonomy" id="190304"/>
    <lineage>
        <taxon>Bacteria</taxon>
        <taxon>Fusobacteriati</taxon>
        <taxon>Fusobacteriota</taxon>
        <taxon>Fusobacteriia</taxon>
        <taxon>Fusobacteriales</taxon>
        <taxon>Fusobacteriaceae</taxon>
        <taxon>Fusobacterium</taxon>
    </lineage>
</organism>
<gene>
    <name evidence="1" type="primary">rnhB</name>
    <name type="ordered locus">FN1371</name>
</gene>
<keyword id="KW-0963">Cytoplasm</keyword>
<keyword id="KW-0255">Endonuclease</keyword>
<keyword id="KW-0378">Hydrolase</keyword>
<keyword id="KW-0464">Manganese</keyword>
<keyword id="KW-0479">Metal-binding</keyword>
<keyword id="KW-0540">Nuclease</keyword>
<keyword id="KW-1185">Reference proteome</keyword>
<evidence type="ECO:0000255" key="1">
    <source>
        <dbReference type="HAMAP-Rule" id="MF_00052"/>
    </source>
</evidence>
<evidence type="ECO:0000255" key="2">
    <source>
        <dbReference type="PROSITE-ProRule" id="PRU01319"/>
    </source>
</evidence>
<comment type="function">
    <text evidence="1">Endonuclease that specifically degrades the RNA of RNA-DNA hybrids.</text>
</comment>
<comment type="catalytic activity">
    <reaction evidence="1">
        <text>Endonucleolytic cleavage to 5'-phosphomonoester.</text>
        <dbReference type="EC" id="3.1.26.4"/>
    </reaction>
</comment>
<comment type="cofactor">
    <cofactor evidence="1">
        <name>Mn(2+)</name>
        <dbReference type="ChEBI" id="CHEBI:29035"/>
    </cofactor>
    <cofactor evidence="1">
        <name>Mg(2+)</name>
        <dbReference type="ChEBI" id="CHEBI:18420"/>
    </cofactor>
    <text evidence="1">Manganese or magnesium. Binds 1 divalent metal ion per monomer in the absence of substrate. May bind a second metal ion after substrate binding.</text>
</comment>
<comment type="subcellular location">
    <subcellularLocation>
        <location evidence="1">Cytoplasm</location>
    </subcellularLocation>
</comment>
<comment type="similarity">
    <text evidence="1">Belongs to the RNase HII family.</text>
</comment>